<proteinExistence type="inferred from homology"/>
<name>COX16_ASPCL</name>
<reference key="1">
    <citation type="journal article" date="2008" name="PLoS Genet.">
        <title>Genomic islands in the pathogenic filamentous fungus Aspergillus fumigatus.</title>
        <authorList>
            <person name="Fedorova N.D."/>
            <person name="Khaldi N."/>
            <person name="Joardar V.S."/>
            <person name="Maiti R."/>
            <person name="Amedeo P."/>
            <person name="Anderson M.J."/>
            <person name="Crabtree J."/>
            <person name="Silva J.C."/>
            <person name="Badger J.H."/>
            <person name="Albarraq A."/>
            <person name="Angiuoli S."/>
            <person name="Bussey H."/>
            <person name="Bowyer P."/>
            <person name="Cotty P.J."/>
            <person name="Dyer P.S."/>
            <person name="Egan A."/>
            <person name="Galens K."/>
            <person name="Fraser-Liggett C.M."/>
            <person name="Haas B.J."/>
            <person name="Inman J.M."/>
            <person name="Kent R."/>
            <person name="Lemieux S."/>
            <person name="Malavazi I."/>
            <person name="Orvis J."/>
            <person name="Roemer T."/>
            <person name="Ronning C.M."/>
            <person name="Sundaram J.P."/>
            <person name="Sutton G."/>
            <person name="Turner G."/>
            <person name="Venter J.C."/>
            <person name="White O.R."/>
            <person name="Whitty B.R."/>
            <person name="Youngman P."/>
            <person name="Wolfe K.H."/>
            <person name="Goldman G.H."/>
            <person name="Wortman J.R."/>
            <person name="Jiang B."/>
            <person name="Denning D.W."/>
            <person name="Nierman W.C."/>
        </authorList>
    </citation>
    <scope>NUCLEOTIDE SEQUENCE [LARGE SCALE GENOMIC DNA]</scope>
    <source>
        <strain>ATCC 1007 / CBS 513.65 / DSM 816 / NCTC 3887 / NRRL 1 / QM 1276 / 107</strain>
    </source>
</reference>
<evidence type="ECO:0000250" key="1">
    <source>
        <dbReference type="UniProtKB" id="P47081"/>
    </source>
</evidence>
<evidence type="ECO:0000255" key="2"/>
<evidence type="ECO:0000305" key="3"/>
<feature type="transit peptide" description="Mitochondrion" evidence="2">
    <location>
        <begin position="1"/>
        <end position="23"/>
    </location>
</feature>
<feature type="chain" id="PRO_0000280640" description="Cytochrome c oxidase assembly protein cox16, mitochondrial">
    <location>
        <begin position="24"/>
        <end position="134"/>
    </location>
</feature>
<feature type="transmembrane region" description="Helical" evidence="2">
    <location>
        <begin position="35"/>
        <end position="55"/>
    </location>
</feature>
<keyword id="KW-0472">Membrane</keyword>
<keyword id="KW-0496">Mitochondrion</keyword>
<keyword id="KW-0999">Mitochondrion inner membrane</keyword>
<keyword id="KW-1185">Reference proteome</keyword>
<keyword id="KW-0809">Transit peptide</keyword>
<keyword id="KW-0812">Transmembrane</keyword>
<keyword id="KW-1133">Transmembrane helix</keyword>
<protein>
    <recommendedName>
        <fullName>Cytochrome c oxidase assembly protein cox16, mitochondrial</fullName>
    </recommendedName>
</protein>
<gene>
    <name type="primary">cox16</name>
    <name type="ORF">ACLA_053630</name>
</gene>
<sequence>MPVFQAKTFRRATTASSSLGERIGAAYRGGLPKHPFLLFGLPFIMVIVAGSFVLTPAAALRYERYDRKVKQLSQEEAMELGLKGPDGEEGIRRNPRRRILGDEREEYYRLMAKDLDNWEQKRVQRFKGEPDGKL</sequence>
<comment type="function">
    <text evidence="1">Required for the assembly of the mitochondrial respiratory chain complex IV (CIV), also known as cytochrome c oxidase. May participate in merging the COX1 and COX2 assembly lines.</text>
</comment>
<comment type="subcellular location">
    <subcellularLocation>
        <location evidence="1">Mitochondrion inner membrane</location>
        <topology evidence="1">Single-pass membrane protein</topology>
    </subcellularLocation>
</comment>
<comment type="similarity">
    <text evidence="3">Belongs to the COX16 family.</text>
</comment>
<comment type="sequence caution" evidence="3">
    <conflict type="erroneous initiation">
        <sequence resource="EMBL-CDS" id="EAW13317"/>
    </conflict>
</comment>
<accession>A1C8Z3</accession>
<dbReference type="EMBL" id="DS027048">
    <property type="protein sequence ID" value="EAW13317.1"/>
    <property type="status" value="ALT_INIT"/>
    <property type="molecule type" value="Genomic_DNA"/>
</dbReference>
<dbReference type="RefSeq" id="XP_001274743.1">
    <property type="nucleotide sequence ID" value="XM_001274742.1"/>
</dbReference>
<dbReference type="STRING" id="344612.A1C8Z3"/>
<dbReference type="EnsemblFungi" id="EAW13317">
    <property type="protein sequence ID" value="EAW13317"/>
    <property type="gene ID" value="ACLA_053630"/>
</dbReference>
<dbReference type="GeneID" id="4706973"/>
<dbReference type="KEGG" id="act:ACLA_053630"/>
<dbReference type="eggNOG" id="ENOG502S9GT">
    <property type="taxonomic scope" value="Eukaryota"/>
</dbReference>
<dbReference type="OrthoDB" id="5516033at2759"/>
<dbReference type="Proteomes" id="UP000006701">
    <property type="component" value="Unassembled WGS sequence"/>
</dbReference>
<dbReference type="GO" id="GO:0005743">
    <property type="term" value="C:mitochondrial inner membrane"/>
    <property type="evidence" value="ECO:0007669"/>
    <property type="project" value="UniProtKB-SubCell"/>
</dbReference>
<dbReference type="GO" id="GO:0033617">
    <property type="term" value="P:mitochondrial cytochrome c oxidase assembly"/>
    <property type="evidence" value="ECO:0007669"/>
    <property type="project" value="TreeGrafter"/>
</dbReference>
<dbReference type="InterPro" id="IPR020164">
    <property type="entry name" value="Cyt_c_Oxase_assmbl_COX16"/>
</dbReference>
<dbReference type="PANTHER" id="PTHR17130:SF14">
    <property type="entry name" value="CYTOCHROME C OXIDASE ASSEMBLY PROTEIN COX16 HOMOLOG, MITOCHONDRIAL"/>
    <property type="match status" value="1"/>
</dbReference>
<dbReference type="PANTHER" id="PTHR17130">
    <property type="entry name" value="MITOCHONDRIAL OUTER MEMBRANE PROTEIN 25"/>
    <property type="match status" value="1"/>
</dbReference>
<dbReference type="Pfam" id="PF14138">
    <property type="entry name" value="COX16"/>
    <property type="match status" value="1"/>
</dbReference>
<organism>
    <name type="scientific">Aspergillus clavatus (strain ATCC 1007 / CBS 513.65 / DSM 816 / NCTC 3887 / NRRL 1 / QM 1276 / 107)</name>
    <dbReference type="NCBI Taxonomy" id="344612"/>
    <lineage>
        <taxon>Eukaryota</taxon>
        <taxon>Fungi</taxon>
        <taxon>Dikarya</taxon>
        <taxon>Ascomycota</taxon>
        <taxon>Pezizomycotina</taxon>
        <taxon>Eurotiomycetes</taxon>
        <taxon>Eurotiomycetidae</taxon>
        <taxon>Eurotiales</taxon>
        <taxon>Aspergillaceae</taxon>
        <taxon>Aspergillus</taxon>
        <taxon>Aspergillus subgen. Fumigati</taxon>
    </lineage>
</organism>